<dbReference type="EC" id="5.4.99.25" evidence="1"/>
<dbReference type="EMBL" id="BX548174">
    <property type="protein sequence ID" value="CAE19806.1"/>
    <property type="molecule type" value="Genomic_DNA"/>
</dbReference>
<dbReference type="RefSeq" id="WP_011132981.1">
    <property type="nucleotide sequence ID" value="NC_005072.1"/>
</dbReference>
<dbReference type="SMR" id="P59882"/>
<dbReference type="STRING" id="59919.PMM1347"/>
<dbReference type="KEGG" id="pmm:PMM1347"/>
<dbReference type="eggNOG" id="COG0130">
    <property type="taxonomic scope" value="Bacteria"/>
</dbReference>
<dbReference type="HOGENOM" id="CLU_032087_0_0_3"/>
<dbReference type="OrthoDB" id="9802309at2"/>
<dbReference type="Proteomes" id="UP000001026">
    <property type="component" value="Chromosome"/>
</dbReference>
<dbReference type="GO" id="GO:0003723">
    <property type="term" value="F:RNA binding"/>
    <property type="evidence" value="ECO:0007669"/>
    <property type="project" value="InterPro"/>
</dbReference>
<dbReference type="GO" id="GO:0160148">
    <property type="term" value="F:tRNA pseudouridine(55) synthase activity"/>
    <property type="evidence" value="ECO:0007669"/>
    <property type="project" value="UniProtKB-EC"/>
</dbReference>
<dbReference type="GO" id="GO:1990481">
    <property type="term" value="P:mRNA pseudouridine synthesis"/>
    <property type="evidence" value="ECO:0007669"/>
    <property type="project" value="TreeGrafter"/>
</dbReference>
<dbReference type="GO" id="GO:0031119">
    <property type="term" value="P:tRNA pseudouridine synthesis"/>
    <property type="evidence" value="ECO:0007669"/>
    <property type="project" value="UniProtKB-UniRule"/>
</dbReference>
<dbReference type="CDD" id="cd02573">
    <property type="entry name" value="PseudoU_synth_EcTruB"/>
    <property type="match status" value="1"/>
</dbReference>
<dbReference type="Gene3D" id="3.30.2350.10">
    <property type="entry name" value="Pseudouridine synthase"/>
    <property type="match status" value="1"/>
</dbReference>
<dbReference type="HAMAP" id="MF_01080">
    <property type="entry name" value="TruB_bact"/>
    <property type="match status" value="1"/>
</dbReference>
<dbReference type="InterPro" id="IPR020103">
    <property type="entry name" value="PsdUridine_synth_cat_dom_sf"/>
</dbReference>
<dbReference type="InterPro" id="IPR002501">
    <property type="entry name" value="PsdUridine_synth_N"/>
</dbReference>
<dbReference type="InterPro" id="IPR014780">
    <property type="entry name" value="tRNA_psdUridine_synth_TruB"/>
</dbReference>
<dbReference type="NCBIfam" id="TIGR00431">
    <property type="entry name" value="TruB"/>
    <property type="match status" value="1"/>
</dbReference>
<dbReference type="PANTHER" id="PTHR13767:SF2">
    <property type="entry name" value="PSEUDOURIDYLATE SYNTHASE TRUB1"/>
    <property type="match status" value="1"/>
</dbReference>
<dbReference type="PANTHER" id="PTHR13767">
    <property type="entry name" value="TRNA-PSEUDOURIDINE SYNTHASE"/>
    <property type="match status" value="1"/>
</dbReference>
<dbReference type="Pfam" id="PF01509">
    <property type="entry name" value="TruB_N"/>
    <property type="match status" value="1"/>
</dbReference>
<dbReference type="SUPFAM" id="SSF55120">
    <property type="entry name" value="Pseudouridine synthase"/>
    <property type="match status" value="1"/>
</dbReference>
<protein>
    <recommendedName>
        <fullName evidence="1">tRNA pseudouridine synthase B</fullName>
        <ecNumber evidence="1">5.4.99.25</ecNumber>
    </recommendedName>
    <alternativeName>
        <fullName evidence="1">tRNA pseudouridine(55) synthase</fullName>
        <shortName evidence="1">Psi55 synthase</shortName>
    </alternativeName>
    <alternativeName>
        <fullName evidence="1">tRNA pseudouridylate synthase</fullName>
    </alternativeName>
    <alternativeName>
        <fullName evidence="1">tRNA-uridine isomerase</fullName>
    </alternativeName>
</protein>
<sequence>MEIKDGFIAINKEKGFTSHDCVKQIRKLLGIKKVGHTGTLDPDVTGTLPIAIGSATRFIQYLPQGKTYIGQIQLGIRTKTDDMQGEILNKKDWPVLSHKQLDKYLNNFRGIIQQVPPIVSSVHVNGERAYKKAFKNEEFELKPKEVEIEELVLNKWDQINGILEIKVSCSSGTYIRSIARDLGGSLDSEGCLLKLKRISACGFHEKNSIKISDLSDNNDKNAPFIIPTISALDHISTLVLANQEEINFWQTGRIIKFDANNFVKSRSFDYKKPIKIIDPNKILLGIGFINEEKTILHPKLVLNAK</sequence>
<proteinExistence type="inferred from homology"/>
<keyword id="KW-0413">Isomerase</keyword>
<keyword id="KW-0819">tRNA processing</keyword>
<comment type="function">
    <text evidence="1">Responsible for synthesis of pseudouridine from uracil-55 in the psi GC loop of transfer RNAs.</text>
</comment>
<comment type="catalytic activity">
    <reaction evidence="1">
        <text>uridine(55) in tRNA = pseudouridine(55) in tRNA</text>
        <dbReference type="Rhea" id="RHEA:42532"/>
        <dbReference type="Rhea" id="RHEA-COMP:10101"/>
        <dbReference type="Rhea" id="RHEA-COMP:10102"/>
        <dbReference type="ChEBI" id="CHEBI:65314"/>
        <dbReference type="ChEBI" id="CHEBI:65315"/>
        <dbReference type="EC" id="5.4.99.25"/>
    </reaction>
</comment>
<comment type="similarity">
    <text evidence="1">Belongs to the pseudouridine synthase TruB family. Type 1 subfamily.</text>
</comment>
<reference key="1">
    <citation type="journal article" date="2003" name="Nature">
        <title>Genome divergence in two Prochlorococcus ecotypes reflects oceanic niche differentiation.</title>
        <authorList>
            <person name="Rocap G."/>
            <person name="Larimer F.W."/>
            <person name="Lamerdin J.E."/>
            <person name="Malfatti S."/>
            <person name="Chain P."/>
            <person name="Ahlgren N.A."/>
            <person name="Arellano A."/>
            <person name="Coleman M."/>
            <person name="Hauser L."/>
            <person name="Hess W.R."/>
            <person name="Johnson Z.I."/>
            <person name="Land M.L."/>
            <person name="Lindell D."/>
            <person name="Post A.F."/>
            <person name="Regala W."/>
            <person name="Shah M."/>
            <person name="Shaw S.L."/>
            <person name="Steglich C."/>
            <person name="Sullivan M.B."/>
            <person name="Ting C.S."/>
            <person name="Tolonen A."/>
            <person name="Webb E.A."/>
            <person name="Zinser E.R."/>
            <person name="Chisholm S.W."/>
        </authorList>
    </citation>
    <scope>NUCLEOTIDE SEQUENCE [LARGE SCALE GENOMIC DNA]</scope>
    <source>
        <strain>CCMP1986 / NIES-2087 / MED4</strain>
    </source>
</reference>
<gene>
    <name evidence="1" type="primary">truB</name>
    <name type="ordered locus">PMM1347</name>
</gene>
<feature type="chain" id="PRO_0000121887" description="tRNA pseudouridine synthase B">
    <location>
        <begin position="1"/>
        <end position="305"/>
    </location>
</feature>
<feature type="active site" description="Nucleophile" evidence="1">
    <location>
        <position position="41"/>
    </location>
</feature>
<accession>P59882</accession>
<name>TRUB_PROMP</name>
<evidence type="ECO:0000255" key="1">
    <source>
        <dbReference type="HAMAP-Rule" id="MF_01080"/>
    </source>
</evidence>
<organism>
    <name type="scientific">Prochlorococcus marinus subsp. pastoris (strain CCMP1986 / NIES-2087 / MED4)</name>
    <dbReference type="NCBI Taxonomy" id="59919"/>
    <lineage>
        <taxon>Bacteria</taxon>
        <taxon>Bacillati</taxon>
        <taxon>Cyanobacteriota</taxon>
        <taxon>Cyanophyceae</taxon>
        <taxon>Synechococcales</taxon>
        <taxon>Prochlorococcaceae</taxon>
        <taxon>Prochlorococcus</taxon>
    </lineage>
</organism>